<name>INGR1_MOUSE</name>
<feature type="signal peptide" evidence="9">
    <location>
        <begin position="1"/>
        <end position="25"/>
    </location>
</feature>
<feature type="chain" id="PRO_0000011010" description="Interferon gamma receptor 1" evidence="9">
    <location>
        <begin position="26"/>
        <end position="477"/>
    </location>
</feature>
<feature type="topological domain" description="Extracellular" evidence="3">
    <location>
        <begin position="26"/>
        <end position="254"/>
    </location>
</feature>
<feature type="transmembrane region" description="Helical" evidence="3">
    <location>
        <begin position="255"/>
        <end position="275"/>
    </location>
</feature>
<feature type="topological domain" description="Cytoplasmic" evidence="3">
    <location>
        <begin position="276"/>
        <end position="477"/>
    </location>
</feature>
<feature type="region of interest" description="Disordered" evidence="4">
    <location>
        <begin position="335"/>
        <end position="386"/>
    </location>
</feature>
<feature type="region of interest" description="Disordered" evidence="4">
    <location>
        <begin position="402"/>
        <end position="446"/>
    </location>
</feature>
<feature type="compositionally biased region" description="Polar residues" evidence="4">
    <location>
        <begin position="375"/>
        <end position="386"/>
    </location>
</feature>
<feature type="compositionally biased region" description="Low complexity" evidence="4">
    <location>
        <begin position="402"/>
        <end position="416"/>
    </location>
</feature>
<feature type="modified residue" description="Phosphoserine" evidence="18">
    <location>
        <position position="362"/>
    </location>
</feature>
<feature type="modified residue" description="Phosphothreonine" evidence="18">
    <location>
        <position position="367"/>
    </location>
</feature>
<feature type="modified residue" description="Phosphoserine" evidence="17 18">
    <location>
        <position position="370"/>
    </location>
</feature>
<feature type="modified residue" description="Phosphothreonine" evidence="18">
    <location>
        <position position="373"/>
    </location>
</feature>
<feature type="modified residue" description="Phosphothreonine" evidence="18">
    <location>
        <position position="375"/>
    </location>
</feature>
<feature type="modified residue" description="Phosphoserine" evidence="18">
    <location>
        <position position="379"/>
    </location>
</feature>
<feature type="modified residue" description="Phosphoserine" evidence="18">
    <location>
        <position position="402"/>
    </location>
</feature>
<feature type="modified residue" description="Phosphotyrosine" evidence="2">
    <location>
        <position position="445"/>
    </location>
</feature>
<feature type="glycosylation site" description="N-linked (GlcNAc...) asparagine" evidence="3">
    <location>
        <position position="61"/>
    </location>
</feature>
<feature type="glycosylation site" description="N-linked (GlcNAc...) asparagine" evidence="3">
    <location>
        <position position="85"/>
    </location>
</feature>
<feature type="disulfide bond" evidence="1">
    <location>
        <begin position="83"/>
        <end position="91"/>
    </location>
</feature>
<feature type="disulfide bond" evidence="1">
    <location>
        <begin position="128"/>
        <end position="174"/>
    </location>
</feature>
<feature type="disulfide bond" evidence="1">
    <location>
        <begin position="203"/>
        <end position="208"/>
    </location>
</feature>
<feature type="disulfide bond" evidence="1">
    <location>
        <begin position="222"/>
        <end position="243"/>
    </location>
</feature>
<feature type="mutagenesis site" description="Complete loss of STAT1 and STAT3 activation." evidence="5">
    <original>Y</original>
    <variation>F</variation>
    <location>
        <position position="445"/>
    </location>
</feature>
<feature type="mutagenesis site" description="Complete loss of interaction with SOCS1." evidence="6">
    <original>Y</original>
    <variation>F</variation>
    <location>
        <position position="467"/>
    </location>
</feature>
<feature type="sequence conflict" description="In Ref. 5; AA sequence." evidence="15" ref="5">
    <location>
        <position position="30"/>
    </location>
</feature>
<feature type="sequence conflict" description="In Ref. 1; AAA37895, 4; AAA39177 and 5; AAA39178." evidence="15" ref="1 4 5">
    <original>E</original>
    <variation>G</variation>
    <location>
        <position position="95"/>
    </location>
</feature>
<keyword id="KW-1003">Cell membrane</keyword>
<keyword id="KW-0903">Direct protein sequencing</keyword>
<keyword id="KW-1015">Disulfide bond</keyword>
<keyword id="KW-0325">Glycoprotein</keyword>
<keyword id="KW-0393">Immunoglobulin domain</keyword>
<keyword id="KW-0472">Membrane</keyword>
<keyword id="KW-0597">Phosphoprotein</keyword>
<keyword id="KW-0675">Receptor</keyword>
<keyword id="KW-1185">Reference proteome</keyword>
<keyword id="KW-0732">Signal</keyword>
<keyword id="KW-0812">Transmembrane</keyword>
<keyword id="KW-1133">Transmembrane helix</keyword>
<keyword id="KW-0832">Ubl conjugation</keyword>
<sequence>MGPQAAAGRMILLVVLMLSAKVGSGALTSTEDPEPPSVPVPTNVLIKSYNLNPVVCWEYQNMSQTPIFTVQVKVYSGSWTDSCTNISDHCCNIYEQIMYPDVSAWARVKAKVGQKESDYARSKEFLMCLKGKVGPPGLEIRRKKEEQLSVLVFHPEVVVNGESQGTMFGDGSTCYTFDYTVYVEHNRSGEILHTKHTVEKEECNETLCELNISVSTLDSRYCISVDGISSFWQVRTEKSKDVCIPPFHDDRKDSIWILVVAPLTVFTVVILVFAYWYTKKNSFKRKSIMLPKSLLSVVKSATLETKPESKYSLVTPHQPAVLESETVICEEPLSTVTAPDSPEAAEQEELSKETKALEAGGSTSAMTPDSPPTPTQRRSFSLLSSNQSGPCSLTAYHSRNGSDSGLVGSGSSISDLESLPNNNSETKMAEHDPPPVRKAPMASGYDKPHMLVDVLVDVGGKESLMGYRLTGEAQELS</sequence>
<accession>P15261</accession>
<accession>Q91Y85</accession>
<proteinExistence type="evidence at protein level"/>
<reference key="1">
    <citation type="journal article" date="1989" name="Proc. Natl. Acad. Sci. U.S.A.">
        <title>Expression cloning of the murine interferon gamma receptor cDNA.</title>
        <authorList>
            <person name="Munro S."/>
            <person name="Maniatis T."/>
        </authorList>
    </citation>
    <scope>NUCLEOTIDE SEQUENCE [MRNA]</scope>
    <scope>FUNCTION</scope>
    <scope>SUBCELLULAR LOCATION</scope>
</reference>
<reference key="2">
    <citation type="journal article" date="1989" name="Proc. Natl. Acad. Sci. U.S.A.">
        <title>Cloning and expression of the cDNA for the murine interferon gamma receptor.</title>
        <authorList>
            <person name="Gray P.W."/>
            <person name="Leong S."/>
            <person name="Fennie E.H."/>
            <person name="Farrar M.A."/>
            <person name="Pingel J.T."/>
            <person name="Fernandez-Luna J."/>
            <person name="Schreiber R.D."/>
        </authorList>
    </citation>
    <scope>NUCLEOTIDE SEQUENCE [MRNA]</scope>
    <scope>FUNCTION</scope>
    <scope>SUBCELLULAR LOCATION</scope>
</reference>
<reference key="3">
    <citation type="journal article" date="1989" name="Proc. Natl. Acad. Sci. U.S.A.">
        <title>Cloning of murine interferon gamma receptor cDNA: expression in human cells mediates high-affinity binding but is not sufficient to confer sensitivity to murine interferon gamma.</title>
        <authorList>
            <person name="Hemmi S."/>
            <person name="Peghini P."/>
            <person name="Metzler M."/>
            <person name="Merlin G."/>
            <person name="Dembic Z."/>
            <person name="Aguet M."/>
        </authorList>
    </citation>
    <scope>NUCLEOTIDE SEQUENCE [MRNA]</scope>
    <scope>FUNCTION</scope>
    <scope>SUBCELLULAR LOCATION</scope>
</reference>
<reference key="4">
    <citation type="journal article" date="1989" name="J. Biol. Chem.">
        <title>Molecular characterization of the murine interferon gamma receptor cDNA.</title>
        <authorList>
            <person name="Kumar C.S."/>
            <person name="Muthukumaran G."/>
            <person name="Frost L.J."/>
            <person name="Noe M."/>
            <person name="Ahn Y.H."/>
            <person name="Mariano T.M."/>
            <person name="Pestka S."/>
        </authorList>
    </citation>
    <scope>NUCLEOTIDE SEQUENCE [MRNA]</scope>
    <scope>FUNCTION</scope>
    <scope>SUBCELLULAR LOCATION</scope>
</reference>
<reference key="5">
    <citation type="journal article" date="1990" name="J. Biol. Chem.">
        <title>Affinity purification, peptide analysis, and cDNA sequence of the mouse interferon gamma receptor.</title>
        <authorList>
            <person name="Cofano F."/>
            <person name="Moore S.K."/>
            <person name="Tanaka S."/>
            <person name="Yuhki N."/>
            <person name="Landolfo S."/>
            <person name="Appella E."/>
        </authorList>
    </citation>
    <scope>NUCLEOTIDE SEQUENCE [MRNA]</scope>
    <scope>PROTEIN SEQUENCE OF 26-35; 133-143; 300-310 AND 428-438</scope>
    <scope>FUNCTION</scope>
    <scope>SUBCELLULAR LOCATION</scope>
</reference>
<reference key="6">
    <citation type="submission" date="1999-01" db="EMBL/GenBank/DDBJ databases">
        <title>Screening for candidate genes of mouse autoimmnue diseases.</title>
        <authorList>
            <person name="Ma R.Z."/>
            <person name="Teuscher C."/>
        </authorList>
    </citation>
    <scope>NUCLEOTIDE SEQUENCE [MRNA]</scope>
    <source>
        <strain>B10.S/J</strain>
        <tissue>Spleen</tissue>
    </source>
</reference>
<reference key="7">
    <citation type="journal article" date="2005" name="Science">
        <title>The transcriptional landscape of the mammalian genome.</title>
        <authorList>
            <person name="Carninci P."/>
            <person name="Kasukawa T."/>
            <person name="Katayama S."/>
            <person name="Gough J."/>
            <person name="Frith M.C."/>
            <person name="Maeda N."/>
            <person name="Oyama R."/>
            <person name="Ravasi T."/>
            <person name="Lenhard B."/>
            <person name="Wells C."/>
            <person name="Kodzius R."/>
            <person name="Shimokawa K."/>
            <person name="Bajic V.B."/>
            <person name="Brenner S.E."/>
            <person name="Batalov S."/>
            <person name="Forrest A.R."/>
            <person name="Zavolan M."/>
            <person name="Davis M.J."/>
            <person name="Wilming L.G."/>
            <person name="Aidinis V."/>
            <person name="Allen J.E."/>
            <person name="Ambesi-Impiombato A."/>
            <person name="Apweiler R."/>
            <person name="Aturaliya R.N."/>
            <person name="Bailey T.L."/>
            <person name="Bansal M."/>
            <person name="Baxter L."/>
            <person name="Beisel K.W."/>
            <person name="Bersano T."/>
            <person name="Bono H."/>
            <person name="Chalk A.M."/>
            <person name="Chiu K.P."/>
            <person name="Choudhary V."/>
            <person name="Christoffels A."/>
            <person name="Clutterbuck D.R."/>
            <person name="Crowe M.L."/>
            <person name="Dalla E."/>
            <person name="Dalrymple B.P."/>
            <person name="de Bono B."/>
            <person name="Della Gatta G."/>
            <person name="di Bernardo D."/>
            <person name="Down T."/>
            <person name="Engstrom P."/>
            <person name="Fagiolini M."/>
            <person name="Faulkner G."/>
            <person name="Fletcher C.F."/>
            <person name="Fukushima T."/>
            <person name="Furuno M."/>
            <person name="Futaki S."/>
            <person name="Gariboldi M."/>
            <person name="Georgii-Hemming P."/>
            <person name="Gingeras T.R."/>
            <person name="Gojobori T."/>
            <person name="Green R.E."/>
            <person name="Gustincich S."/>
            <person name="Harbers M."/>
            <person name="Hayashi Y."/>
            <person name="Hensch T.K."/>
            <person name="Hirokawa N."/>
            <person name="Hill D."/>
            <person name="Huminiecki L."/>
            <person name="Iacono M."/>
            <person name="Ikeo K."/>
            <person name="Iwama A."/>
            <person name="Ishikawa T."/>
            <person name="Jakt M."/>
            <person name="Kanapin A."/>
            <person name="Katoh M."/>
            <person name="Kawasawa Y."/>
            <person name="Kelso J."/>
            <person name="Kitamura H."/>
            <person name="Kitano H."/>
            <person name="Kollias G."/>
            <person name="Krishnan S.P."/>
            <person name="Kruger A."/>
            <person name="Kummerfeld S.K."/>
            <person name="Kurochkin I.V."/>
            <person name="Lareau L.F."/>
            <person name="Lazarevic D."/>
            <person name="Lipovich L."/>
            <person name="Liu J."/>
            <person name="Liuni S."/>
            <person name="McWilliam S."/>
            <person name="Madan Babu M."/>
            <person name="Madera M."/>
            <person name="Marchionni L."/>
            <person name="Matsuda H."/>
            <person name="Matsuzawa S."/>
            <person name="Miki H."/>
            <person name="Mignone F."/>
            <person name="Miyake S."/>
            <person name="Morris K."/>
            <person name="Mottagui-Tabar S."/>
            <person name="Mulder N."/>
            <person name="Nakano N."/>
            <person name="Nakauchi H."/>
            <person name="Ng P."/>
            <person name="Nilsson R."/>
            <person name="Nishiguchi S."/>
            <person name="Nishikawa S."/>
            <person name="Nori F."/>
            <person name="Ohara O."/>
            <person name="Okazaki Y."/>
            <person name="Orlando V."/>
            <person name="Pang K.C."/>
            <person name="Pavan W.J."/>
            <person name="Pavesi G."/>
            <person name="Pesole G."/>
            <person name="Petrovsky N."/>
            <person name="Piazza S."/>
            <person name="Reed J."/>
            <person name="Reid J.F."/>
            <person name="Ring B.Z."/>
            <person name="Ringwald M."/>
            <person name="Rost B."/>
            <person name="Ruan Y."/>
            <person name="Salzberg S.L."/>
            <person name="Sandelin A."/>
            <person name="Schneider C."/>
            <person name="Schoenbach C."/>
            <person name="Sekiguchi K."/>
            <person name="Semple C.A."/>
            <person name="Seno S."/>
            <person name="Sessa L."/>
            <person name="Sheng Y."/>
            <person name="Shibata Y."/>
            <person name="Shimada H."/>
            <person name="Shimada K."/>
            <person name="Silva D."/>
            <person name="Sinclair B."/>
            <person name="Sperling S."/>
            <person name="Stupka E."/>
            <person name="Sugiura K."/>
            <person name="Sultana R."/>
            <person name="Takenaka Y."/>
            <person name="Taki K."/>
            <person name="Tammoja K."/>
            <person name="Tan S.L."/>
            <person name="Tang S."/>
            <person name="Taylor M.S."/>
            <person name="Tegner J."/>
            <person name="Teichmann S.A."/>
            <person name="Ueda H.R."/>
            <person name="van Nimwegen E."/>
            <person name="Verardo R."/>
            <person name="Wei C.L."/>
            <person name="Yagi K."/>
            <person name="Yamanishi H."/>
            <person name="Zabarovsky E."/>
            <person name="Zhu S."/>
            <person name="Zimmer A."/>
            <person name="Hide W."/>
            <person name="Bult C."/>
            <person name="Grimmond S.M."/>
            <person name="Teasdale R.D."/>
            <person name="Liu E.T."/>
            <person name="Brusic V."/>
            <person name="Quackenbush J."/>
            <person name="Wahlestedt C."/>
            <person name="Mattick J.S."/>
            <person name="Hume D.A."/>
            <person name="Kai C."/>
            <person name="Sasaki D."/>
            <person name="Tomaru Y."/>
            <person name="Fukuda S."/>
            <person name="Kanamori-Katayama M."/>
            <person name="Suzuki M."/>
            <person name="Aoki J."/>
            <person name="Arakawa T."/>
            <person name="Iida J."/>
            <person name="Imamura K."/>
            <person name="Itoh M."/>
            <person name="Kato T."/>
            <person name="Kawaji H."/>
            <person name="Kawagashira N."/>
            <person name="Kawashima T."/>
            <person name="Kojima M."/>
            <person name="Kondo S."/>
            <person name="Konno H."/>
            <person name="Nakano K."/>
            <person name="Ninomiya N."/>
            <person name="Nishio T."/>
            <person name="Okada M."/>
            <person name="Plessy C."/>
            <person name="Shibata K."/>
            <person name="Shiraki T."/>
            <person name="Suzuki S."/>
            <person name="Tagami M."/>
            <person name="Waki K."/>
            <person name="Watahiki A."/>
            <person name="Okamura-Oho Y."/>
            <person name="Suzuki H."/>
            <person name="Kawai J."/>
            <person name="Hayashizaki Y."/>
        </authorList>
    </citation>
    <scope>NUCLEOTIDE SEQUENCE [LARGE SCALE MRNA]</scope>
    <source>
        <strain>C57BL/6J</strain>
        <strain>NOD</strain>
        <tissue>Bone marrow</tissue>
        <tissue>Thymus</tissue>
    </source>
</reference>
<reference key="8">
    <citation type="submission" date="2005-07" db="EMBL/GenBank/DDBJ databases">
        <authorList>
            <person name="Mural R.J."/>
            <person name="Adams M.D."/>
            <person name="Myers E.W."/>
            <person name="Smith H.O."/>
            <person name="Venter J.C."/>
        </authorList>
    </citation>
    <scope>NUCLEOTIDE SEQUENCE [LARGE SCALE GENOMIC DNA]</scope>
</reference>
<reference key="9">
    <citation type="journal article" date="1995" name="Gene">
        <title>Characterization of the 5' flanking region and gene encoding the mouse interferon-gamma receptor.</title>
        <authorList>
            <person name="Raval P."/>
            <person name="Obici S."/>
            <person name="Russell S.W."/>
            <person name="Murphy W.J."/>
        </authorList>
    </citation>
    <scope>NUCLEOTIDE SEQUENCE [GENOMIC DNA] OF 1-28</scope>
</reference>
<reference key="10">
    <citation type="journal article" date="2004" name="J. Biol. Chem.">
        <title>Alternative activation of STAT1 and STAT3 in response to interferon-gamma.</title>
        <authorList>
            <person name="Qing Y."/>
            <person name="Stark G.R."/>
        </authorList>
    </citation>
    <scope>FUNCTION</scope>
    <scope>MUTAGENESIS OF TYR-445</scope>
</reference>
<reference key="11">
    <citation type="journal article" date="2005" name="J. Biol. Chem.">
        <title>Role of tyrosine 441 of interferon-gamma receptor subunit 1 in SOCS-1-mediated attenuation of STAT1 activation.</title>
        <authorList>
            <person name="Qing Y."/>
            <person name="Costa-Pereira A.P."/>
            <person name="Watling D."/>
            <person name="Stark G.R."/>
        </authorList>
    </citation>
    <scope>FUNCTION</scope>
    <scope>MUTAGENESIS OF TYR-467</scope>
    <scope>INTERACTION WITH SOCS1</scope>
</reference>
<reference key="12">
    <citation type="journal article" date="2007" name="Proc. Natl. Acad. Sci. U.S.A.">
        <title>Large-scale phosphorylation analysis of mouse liver.</title>
        <authorList>
            <person name="Villen J."/>
            <person name="Beausoleil S.A."/>
            <person name="Gerber S.A."/>
            <person name="Gygi S.P."/>
        </authorList>
    </citation>
    <scope>PHOSPHORYLATION [LARGE SCALE ANALYSIS] AT SER-370</scope>
    <scope>IDENTIFICATION BY MASS SPECTROMETRY [LARGE SCALE ANALYSIS]</scope>
    <source>
        <tissue>Liver</tissue>
    </source>
</reference>
<reference key="13">
    <citation type="journal article" date="2010" name="Cell">
        <title>A tissue-specific atlas of mouse protein phosphorylation and expression.</title>
        <authorList>
            <person name="Huttlin E.L."/>
            <person name="Jedrychowski M.P."/>
            <person name="Elias J.E."/>
            <person name="Goswami T."/>
            <person name="Rad R."/>
            <person name="Beausoleil S.A."/>
            <person name="Villen J."/>
            <person name="Haas W."/>
            <person name="Sowa M.E."/>
            <person name="Gygi S.P."/>
        </authorList>
    </citation>
    <scope>PHOSPHORYLATION [LARGE SCALE ANALYSIS] AT SER-362; THR-367; SER-370; THR-373; THR-375; SER-379 AND SER-402</scope>
    <scope>IDENTIFICATION BY MASS SPECTROMETRY [LARGE SCALE ANALYSIS]</scope>
    <source>
        <tissue>Brown adipose tissue</tissue>
        <tissue>Heart</tissue>
        <tissue>Kidney</tissue>
        <tissue>Lung</tissue>
        <tissue>Spleen</tissue>
        <tissue>Testis</tissue>
    </source>
</reference>
<reference key="14">
    <citation type="journal article" date="2010" name="Am. J. Transplant.">
        <title>IFN-gamma triggered STAT1-PKB/AKT signalling pathway influences the function of alloantigen reactive regulatory T cells.</title>
        <authorList>
            <person name="Wei B."/>
            <person name="Baker S."/>
            <person name="Wieckiewicz J."/>
            <person name="Wood K.J."/>
        </authorList>
    </citation>
    <scope>FUNCTION</scope>
    <scope>DISRUPTION PHENOTYPE</scope>
</reference>
<reference key="15">
    <citation type="journal article" date="2010" name="J. Virol.">
        <title>Mice lacking alpha/beta and gamma interferon receptors are susceptible to junin virus infection.</title>
        <authorList>
            <person name="Kolokoltsova O.A."/>
            <person name="Yun N.E."/>
            <person name="Poussard A.L."/>
            <person name="Smith J.K."/>
            <person name="Smith J.N."/>
            <person name="Salazar M."/>
            <person name="Walker A."/>
            <person name="Tseng C.T."/>
            <person name="Aronson J.F."/>
            <person name="Paessler S."/>
        </authorList>
    </citation>
    <scope>FUNCTION</scope>
    <scope>DISRUPTION PHENOTYPE</scope>
</reference>
<reference key="16">
    <citation type="journal article" date="2016" name="Oncotarget">
        <title>Lack of interferon-gamma receptor results in a microenvironment favorable for intestinal tumorigenesis.</title>
        <authorList>
            <person name="Zhang C."/>
            <person name="Hou D."/>
            <person name="Wei H."/>
            <person name="Zhao M."/>
            <person name="Yang L."/>
            <person name="Liu Q."/>
            <person name="Zhang X."/>
            <person name="Gong Y."/>
            <person name="Shao C."/>
        </authorList>
    </citation>
    <scope>FUNCTION</scope>
    <scope>DISRUPTION PHENOTYPE</scope>
</reference>
<organism>
    <name type="scientific">Mus musculus</name>
    <name type="common">Mouse</name>
    <dbReference type="NCBI Taxonomy" id="10090"/>
    <lineage>
        <taxon>Eukaryota</taxon>
        <taxon>Metazoa</taxon>
        <taxon>Chordata</taxon>
        <taxon>Craniata</taxon>
        <taxon>Vertebrata</taxon>
        <taxon>Euteleostomi</taxon>
        <taxon>Mammalia</taxon>
        <taxon>Eutheria</taxon>
        <taxon>Euarchontoglires</taxon>
        <taxon>Glires</taxon>
        <taxon>Rodentia</taxon>
        <taxon>Myomorpha</taxon>
        <taxon>Muroidea</taxon>
        <taxon>Muridae</taxon>
        <taxon>Murinae</taxon>
        <taxon>Mus</taxon>
        <taxon>Mus</taxon>
    </lineage>
</organism>
<protein>
    <recommendedName>
        <fullName evidence="16">Interferon gamma receptor 1</fullName>
        <shortName>IFN-gamma receptor 1</shortName>
        <shortName>IFN-gamma-R1</shortName>
    </recommendedName>
    <alternativeName>
        <fullName evidence="2">Interferon gamma receptor alpha-chain</fullName>
        <shortName evidence="2">IFN-gamma-R-alpha</shortName>
    </alternativeName>
    <cdAntigenName>CD119</cdAntigenName>
</protein>
<evidence type="ECO:0000250" key="1"/>
<evidence type="ECO:0000250" key="2">
    <source>
        <dbReference type="UniProtKB" id="P15260"/>
    </source>
</evidence>
<evidence type="ECO:0000255" key="3"/>
<evidence type="ECO:0000256" key="4">
    <source>
        <dbReference type="SAM" id="MobiDB-lite"/>
    </source>
</evidence>
<evidence type="ECO:0000269" key="5">
    <source>
    </source>
</evidence>
<evidence type="ECO:0000269" key="6">
    <source>
    </source>
</evidence>
<evidence type="ECO:0000269" key="7">
    <source>
    </source>
</evidence>
<evidence type="ECO:0000269" key="8">
    <source>
    </source>
</evidence>
<evidence type="ECO:0000269" key="9">
    <source>
    </source>
</evidence>
<evidence type="ECO:0000269" key="10">
    <source>
    </source>
</evidence>
<evidence type="ECO:0000269" key="11">
    <source>
    </source>
</evidence>
<evidence type="ECO:0000269" key="12">
    <source>
    </source>
</evidence>
<evidence type="ECO:0000269" key="13">
    <source>
    </source>
</evidence>
<evidence type="ECO:0000269" key="14">
    <source>
    </source>
</evidence>
<evidence type="ECO:0000305" key="15"/>
<evidence type="ECO:0000312" key="16">
    <source>
        <dbReference type="MGI" id="MGI:107655"/>
    </source>
</evidence>
<evidence type="ECO:0007744" key="17">
    <source>
    </source>
</evidence>
<evidence type="ECO:0007744" key="18">
    <source>
    </source>
</evidence>
<comment type="function">
    <text evidence="5 7 8 9 10 11 12 13 14">Receptor subunit for interferon gamma/INFG that plays crucial roles in antimicrobial, antiviral, and antitumor responses by activating effector immune cells and enhancing antigen presentation (, PubMed:20926559, PubMed:27286456). Associates with transmembrane accessory factor IFNGR2 to form a functional receptor (PubMed:2137461, PubMed:2530216, PubMed:2530582, PubMed:2531896, PubMed:2532365). Upon ligand binding, the intracellular domain of IFNGR1 opens out to allow association of downstream signaling components JAK1 and JAK2. In turn, activated JAK1 phosphorylates IFNGR1 to form a docking site for STAT1. Subsequent phosphorylation of STAT1 leads to its dimerization, translocation to the nucleus, and stimulation of target gene transcription (PubMed:19889125). STAT3 can also be activated in a similar manner although activation seems weaker (PubMed:15284232). IFNGR1 intracellular domain phosphorylation also provides a docking site for SOCS1 that regulates the JAK-STAT pathway by competing with STAT1 binding to IFNGR1 (PubMed:15522878).</text>
</comment>
<comment type="subunit">
    <text evidence="2 6">Monomer. Heterodimer with IFNGR2, to form the IFNG receptor complex. Interacts with JAK1. Interacts (when phosphorylated) with STAT1 (By similarity). Interacts with SOCS1 (PubMed:15522878).</text>
</comment>
<comment type="subcellular location">
    <subcellularLocation>
        <location evidence="9 10 11 12 13">Cell membrane</location>
        <topology evidence="3">Single-pass type I membrane protein</topology>
    </subcellularLocation>
</comment>
<comment type="PTM">
    <text evidence="2">Phosphorylated at Ser/Thr residues. Phosphorylation of Tyr-445 is required for IFNG receptor signal transduction. Influenza virus infection leads to phosphorylation in a CSNK1A1-dependent manner.</text>
</comment>
<comment type="PTM">
    <text evidence="2">Ubiquitinated after phosphorylation in a CSNK1A1-dependent manner, leading to the lysosome-dependent degradation. Proteasomally degraded through 'Lys-48'-mediated ubiquitination. Ubiquitination is necessary for efficient IFNGR1 signaling.</text>
</comment>
<comment type="disruption phenotype">
    <text evidence="7 8 14">Deletion mutants show shortened lifespan and enhanced intestinal tumorigenesis. These tumors exhibit increased inflammation (PubMed:27286456). Loss of STAT1 signaling pathway activation is also observed (PubMed:19889125). After viral infection such as junin virus, mice develop disseminated infection and severe disease (PubMed:20926559).</text>
</comment>
<comment type="similarity">
    <text evidence="15">Belongs to the type II cytokine receptor family.</text>
</comment>
<comment type="sequence caution" evidence="15">
    <conflict type="erroneous initiation">
        <sequence resource="EMBL-CDS" id="AAA37895"/>
    </conflict>
    <text>Truncated N-terminus.</text>
</comment>
<dbReference type="EMBL" id="M28995">
    <property type="protein sequence ID" value="AAA37895.1"/>
    <property type="status" value="ALT_INIT"/>
    <property type="molecule type" value="mRNA"/>
</dbReference>
<dbReference type="EMBL" id="M26711">
    <property type="protein sequence ID" value="AAA37896.1"/>
    <property type="molecule type" value="mRNA"/>
</dbReference>
<dbReference type="EMBL" id="M28233">
    <property type="protein sequence ID" value="AAA37898.1"/>
    <property type="molecule type" value="mRNA"/>
</dbReference>
<dbReference type="EMBL" id="M25764">
    <property type="protein sequence ID" value="AAA39177.1"/>
    <property type="molecule type" value="mRNA"/>
</dbReference>
<dbReference type="EMBL" id="J05265">
    <property type="protein sequence ID" value="AAA39178.1"/>
    <property type="molecule type" value="mRNA"/>
</dbReference>
<dbReference type="EMBL" id="AF128216">
    <property type="protein sequence ID" value="AAF22557.1"/>
    <property type="molecule type" value="mRNA"/>
</dbReference>
<dbReference type="EMBL" id="AK151079">
    <property type="protein sequence ID" value="BAE30094.1"/>
    <property type="molecule type" value="mRNA"/>
</dbReference>
<dbReference type="EMBL" id="AK153347">
    <property type="protein sequence ID" value="BAE31923.1"/>
    <property type="molecule type" value="mRNA"/>
</dbReference>
<dbReference type="EMBL" id="AK159359">
    <property type="protein sequence ID" value="BAE35017.1"/>
    <property type="molecule type" value="mRNA"/>
</dbReference>
<dbReference type="EMBL" id="AK169593">
    <property type="protein sequence ID" value="BAE41245.1"/>
    <property type="molecule type" value="mRNA"/>
</dbReference>
<dbReference type="EMBL" id="CH466562">
    <property type="protein sequence ID" value="EDL03452.1"/>
    <property type="molecule type" value="Genomic_DNA"/>
</dbReference>
<dbReference type="EMBL" id="U05960">
    <property type="protein sequence ID" value="AAA80980.1"/>
    <property type="molecule type" value="Genomic_DNA"/>
</dbReference>
<dbReference type="CCDS" id="CCDS35856.1"/>
<dbReference type="PIR" id="A34368">
    <property type="entry name" value="A34368"/>
</dbReference>
<dbReference type="RefSeq" id="NP_034641.1">
    <property type="nucleotide sequence ID" value="NM_010511.3"/>
</dbReference>
<dbReference type="SMR" id="P15261"/>
<dbReference type="BioGRID" id="200542">
    <property type="interactions" value="9"/>
</dbReference>
<dbReference type="FunCoup" id="P15261">
    <property type="interactions" value="809"/>
</dbReference>
<dbReference type="STRING" id="10090.ENSMUSP00000020188"/>
<dbReference type="GlyCosmos" id="P15261">
    <property type="glycosylation" value="2 sites, No reported glycans"/>
</dbReference>
<dbReference type="GlyGen" id="P15261">
    <property type="glycosylation" value="4 sites, 1 N-linked glycan (1 site)"/>
</dbReference>
<dbReference type="iPTMnet" id="P15261"/>
<dbReference type="PhosphoSitePlus" id="P15261"/>
<dbReference type="jPOST" id="P15261"/>
<dbReference type="PaxDb" id="10090-ENSMUSP00000020188"/>
<dbReference type="PeptideAtlas" id="P15261"/>
<dbReference type="ProteomicsDB" id="269407"/>
<dbReference type="Pumba" id="P15261"/>
<dbReference type="Antibodypedia" id="3840">
    <property type="antibodies" value="808 antibodies from 42 providers"/>
</dbReference>
<dbReference type="DNASU" id="15979"/>
<dbReference type="Ensembl" id="ENSMUST00000020188.13">
    <property type="protein sequence ID" value="ENSMUSP00000020188.7"/>
    <property type="gene ID" value="ENSMUSG00000020009.14"/>
</dbReference>
<dbReference type="GeneID" id="15979"/>
<dbReference type="KEGG" id="mmu:15979"/>
<dbReference type="UCSC" id="uc007eng.1">
    <property type="organism name" value="mouse"/>
</dbReference>
<dbReference type="AGR" id="MGI:107655"/>
<dbReference type="CTD" id="3459"/>
<dbReference type="MGI" id="MGI:107655">
    <property type="gene designation" value="Ifngr1"/>
</dbReference>
<dbReference type="VEuPathDB" id="HostDB:ENSMUSG00000020009"/>
<dbReference type="eggNOG" id="ENOG502RXGW">
    <property type="taxonomic scope" value="Eukaryota"/>
</dbReference>
<dbReference type="GeneTree" id="ENSGT00510000048929"/>
<dbReference type="HOGENOM" id="CLU_043814_0_0_1"/>
<dbReference type="InParanoid" id="P15261"/>
<dbReference type="OMA" id="NIMLPKS"/>
<dbReference type="OrthoDB" id="9946382at2759"/>
<dbReference type="PhylomeDB" id="P15261"/>
<dbReference type="TreeFam" id="TF338358"/>
<dbReference type="Reactome" id="R-MMU-877300">
    <property type="pathway name" value="Interferon gamma signaling"/>
</dbReference>
<dbReference type="Reactome" id="R-MMU-877312">
    <property type="pathway name" value="Regulation of IFNG signaling"/>
</dbReference>
<dbReference type="Reactome" id="R-MMU-9732724">
    <property type="pathway name" value="IFNG signaling activates MAPKs"/>
</dbReference>
<dbReference type="BioGRID-ORCS" id="15979">
    <property type="hits" value="26 hits in 83 CRISPR screens"/>
</dbReference>
<dbReference type="ChiTaRS" id="Ifngr1">
    <property type="organism name" value="mouse"/>
</dbReference>
<dbReference type="PRO" id="PR:P15261"/>
<dbReference type="Proteomes" id="UP000000589">
    <property type="component" value="Chromosome 10"/>
</dbReference>
<dbReference type="RNAct" id="P15261">
    <property type="molecule type" value="protein"/>
</dbReference>
<dbReference type="Bgee" id="ENSMUSG00000020009">
    <property type="expression patterns" value="Expressed in skeleton of lower jaw and 260 other cell types or tissues"/>
</dbReference>
<dbReference type="ExpressionAtlas" id="P15261">
    <property type="expression patterns" value="baseline and differential"/>
</dbReference>
<dbReference type="GO" id="GO:0005886">
    <property type="term" value="C:plasma membrane"/>
    <property type="evidence" value="ECO:0007669"/>
    <property type="project" value="UniProtKB-SubCell"/>
</dbReference>
<dbReference type="GO" id="GO:0019955">
    <property type="term" value="F:cytokine binding"/>
    <property type="evidence" value="ECO:0007669"/>
    <property type="project" value="InterPro"/>
</dbReference>
<dbReference type="GO" id="GO:0004906">
    <property type="term" value="F:type II interferon receptor activity"/>
    <property type="evidence" value="ECO:0007669"/>
    <property type="project" value="Ensembl"/>
</dbReference>
<dbReference type="GO" id="GO:0048143">
    <property type="term" value="P:astrocyte activation"/>
    <property type="evidence" value="ECO:0000316"/>
    <property type="project" value="ARUK-UCL"/>
</dbReference>
<dbReference type="GO" id="GO:0051607">
    <property type="term" value="P:defense response to virus"/>
    <property type="evidence" value="ECO:0000315"/>
    <property type="project" value="MGI"/>
</dbReference>
<dbReference type="GO" id="GO:0001774">
    <property type="term" value="P:microglial cell activation"/>
    <property type="evidence" value="ECO:0000316"/>
    <property type="project" value="ARUK-UCL"/>
</dbReference>
<dbReference type="GO" id="GO:1900222">
    <property type="term" value="P:negative regulation of amyloid-beta clearance"/>
    <property type="evidence" value="ECO:0000316"/>
    <property type="project" value="ARUK-UCL"/>
</dbReference>
<dbReference type="GO" id="GO:1902004">
    <property type="term" value="P:positive regulation of amyloid-beta formation"/>
    <property type="evidence" value="ECO:0000316"/>
    <property type="project" value="ARUK-UCL"/>
</dbReference>
<dbReference type="GO" id="GO:0010628">
    <property type="term" value="P:positive regulation of gene expression"/>
    <property type="evidence" value="ECO:0000316"/>
    <property type="project" value="ARUK-UCL"/>
</dbReference>
<dbReference type="GO" id="GO:0032760">
    <property type="term" value="P:positive regulation of tumor necrosis factor production"/>
    <property type="evidence" value="ECO:0000316"/>
    <property type="project" value="ARUK-UCL"/>
</dbReference>
<dbReference type="GO" id="GO:0038196">
    <property type="term" value="P:type III interferon-mediated signaling pathway"/>
    <property type="evidence" value="ECO:0007669"/>
    <property type="project" value="Ensembl"/>
</dbReference>
<dbReference type="FunFam" id="2.60.40.10:FF:001244">
    <property type="entry name" value="Interferon gamma receptor 1"/>
    <property type="match status" value="1"/>
</dbReference>
<dbReference type="FunFam" id="2.60.40.10:FF:001425">
    <property type="entry name" value="Interferon gamma receptor 1"/>
    <property type="match status" value="1"/>
</dbReference>
<dbReference type="Gene3D" id="2.60.40.10">
    <property type="entry name" value="Immunoglobulins"/>
    <property type="match status" value="2"/>
</dbReference>
<dbReference type="InterPro" id="IPR003961">
    <property type="entry name" value="FN3_dom"/>
</dbReference>
<dbReference type="InterPro" id="IPR036116">
    <property type="entry name" value="FN3_sf"/>
</dbReference>
<dbReference type="InterPro" id="IPR021126">
    <property type="entry name" value="IFN_gamma_rc_D2_pox/mammal"/>
</dbReference>
<dbReference type="InterPro" id="IPR013783">
    <property type="entry name" value="Ig-like_fold"/>
</dbReference>
<dbReference type="InterPro" id="IPR008355">
    <property type="entry name" value="Interferon_gamma_rcpt_asu"/>
</dbReference>
<dbReference type="InterPro" id="IPR050650">
    <property type="entry name" value="Type-II_Cytokine-TF_Rcpt"/>
</dbReference>
<dbReference type="PANTHER" id="PTHR20859:SF5">
    <property type="entry name" value="INTERFERON GAMMA RECEPTOR 1"/>
    <property type="match status" value="1"/>
</dbReference>
<dbReference type="PANTHER" id="PTHR20859">
    <property type="entry name" value="INTERFERON/INTERLEUKIN RECEPTOR"/>
    <property type="match status" value="1"/>
</dbReference>
<dbReference type="Pfam" id="PF07140">
    <property type="entry name" value="IFNGR1_D2"/>
    <property type="match status" value="1"/>
</dbReference>
<dbReference type="Pfam" id="PF20634">
    <property type="entry name" value="IFNGR1_transm"/>
    <property type="match status" value="1"/>
</dbReference>
<dbReference type="Pfam" id="PF01108">
    <property type="entry name" value="Tissue_fac"/>
    <property type="match status" value="1"/>
</dbReference>
<dbReference type="PRINTS" id="PR01777">
    <property type="entry name" value="INTERFERONGR"/>
</dbReference>
<dbReference type="SUPFAM" id="SSF49265">
    <property type="entry name" value="Fibronectin type III"/>
    <property type="match status" value="2"/>
</dbReference>
<gene>
    <name evidence="16" type="primary">Ifngr1</name>
    <name type="synonym">Ifngr</name>
</gene>